<protein>
    <recommendedName>
        <fullName evidence="1">Trigger factor</fullName>
        <shortName evidence="1">TF</shortName>
        <ecNumber evidence="1">5.2.1.8</ecNumber>
    </recommendedName>
    <alternativeName>
        <fullName evidence="1">PPIase</fullName>
    </alternativeName>
</protein>
<keyword id="KW-0131">Cell cycle</keyword>
<keyword id="KW-0132">Cell division</keyword>
<keyword id="KW-0143">Chaperone</keyword>
<keyword id="KW-0963">Cytoplasm</keyword>
<keyword id="KW-0413">Isomerase</keyword>
<keyword id="KW-1185">Reference proteome</keyword>
<keyword id="KW-0697">Rotamase</keyword>
<name>TIG_HELHP</name>
<organism>
    <name type="scientific">Helicobacter hepaticus (strain ATCC 51449 / 3B1)</name>
    <dbReference type="NCBI Taxonomy" id="235279"/>
    <lineage>
        <taxon>Bacteria</taxon>
        <taxon>Pseudomonadati</taxon>
        <taxon>Campylobacterota</taxon>
        <taxon>Epsilonproteobacteria</taxon>
        <taxon>Campylobacterales</taxon>
        <taxon>Helicobacteraceae</taxon>
        <taxon>Helicobacter</taxon>
    </lineage>
</organism>
<reference key="1">
    <citation type="journal article" date="2003" name="Proc. Natl. Acad. Sci. U.S.A.">
        <title>The complete genome sequence of the carcinogenic bacterium Helicobacter hepaticus.</title>
        <authorList>
            <person name="Suerbaum S."/>
            <person name="Josenhans C."/>
            <person name="Sterzenbach T."/>
            <person name="Drescher B."/>
            <person name="Brandt P."/>
            <person name="Bell M."/>
            <person name="Droege M."/>
            <person name="Fartmann B."/>
            <person name="Fischer H.-P."/>
            <person name="Ge Z."/>
            <person name="Hoerster A."/>
            <person name="Holland R."/>
            <person name="Klein K."/>
            <person name="Koenig J."/>
            <person name="Macko L."/>
            <person name="Mendz G.L."/>
            <person name="Nyakatura G."/>
            <person name="Schauer D.B."/>
            <person name="Shen Z."/>
            <person name="Weber J."/>
            <person name="Frosch M."/>
            <person name="Fox J.G."/>
        </authorList>
    </citation>
    <scope>NUCLEOTIDE SEQUENCE [LARGE SCALE GENOMIC DNA]</scope>
    <source>
        <strain>ATCC 51449 / 3B1</strain>
    </source>
</reference>
<proteinExistence type="inferred from homology"/>
<dbReference type="EC" id="5.2.1.8" evidence="1"/>
<dbReference type="EMBL" id="AE017125">
    <property type="protein sequence ID" value="AAP77163.1"/>
    <property type="molecule type" value="Genomic_DNA"/>
</dbReference>
<dbReference type="RefSeq" id="WP_011115408.1">
    <property type="nucleotide sequence ID" value="NC_004917.1"/>
</dbReference>
<dbReference type="SMR" id="Q7VIN8"/>
<dbReference type="STRING" id="235279.HH_0566"/>
<dbReference type="KEGG" id="hhe:HH_0566"/>
<dbReference type="eggNOG" id="COG0544">
    <property type="taxonomic scope" value="Bacteria"/>
</dbReference>
<dbReference type="HOGENOM" id="CLU_033058_2_2_7"/>
<dbReference type="OrthoDB" id="9767721at2"/>
<dbReference type="Proteomes" id="UP000002495">
    <property type="component" value="Chromosome"/>
</dbReference>
<dbReference type="GO" id="GO:0005737">
    <property type="term" value="C:cytoplasm"/>
    <property type="evidence" value="ECO:0007669"/>
    <property type="project" value="UniProtKB-SubCell"/>
</dbReference>
<dbReference type="GO" id="GO:0003755">
    <property type="term" value="F:peptidyl-prolyl cis-trans isomerase activity"/>
    <property type="evidence" value="ECO:0007669"/>
    <property type="project" value="UniProtKB-UniRule"/>
</dbReference>
<dbReference type="GO" id="GO:0051301">
    <property type="term" value="P:cell division"/>
    <property type="evidence" value="ECO:0007669"/>
    <property type="project" value="UniProtKB-KW"/>
</dbReference>
<dbReference type="GO" id="GO:0006457">
    <property type="term" value="P:protein folding"/>
    <property type="evidence" value="ECO:0007669"/>
    <property type="project" value="UniProtKB-UniRule"/>
</dbReference>
<dbReference type="GO" id="GO:0015031">
    <property type="term" value="P:protein transport"/>
    <property type="evidence" value="ECO:0007669"/>
    <property type="project" value="UniProtKB-UniRule"/>
</dbReference>
<dbReference type="FunFam" id="3.10.50.40:FF:000001">
    <property type="entry name" value="Trigger factor"/>
    <property type="match status" value="1"/>
</dbReference>
<dbReference type="Gene3D" id="3.10.50.40">
    <property type="match status" value="1"/>
</dbReference>
<dbReference type="Gene3D" id="3.30.70.1050">
    <property type="entry name" value="Trigger factor ribosome-binding domain"/>
    <property type="match status" value="1"/>
</dbReference>
<dbReference type="Gene3D" id="1.10.3120.10">
    <property type="entry name" value="Trigger factor, C-terminal domain"/>
    <property type="match status" value="1"/>
</dbReference>
<dbReference type="HAMAP" id="MF_00303">
    <property type="entry name" value="Trigger_factor_Tig"/>
    <property type="match status" value="1"/>
</dbReference>
<dbReference type="InterPro" id="IPR046357">
    <property type="entry name" value="PPIase_dom_sf"/>
</dbReference>
<dbReference type="InterPro" id="IPR001179">
    <property type="entry name" value="PPIase_FKBP_dom"/>
</dbReference>
<dbReference type="InterPro" id="IPR005215">
    <property type="entry name" value="Trig_fac"/>
</dbReference>
<dbReference type="InterPro" id="IPR008880">
    <property type="entry name" value="Trigger_fac_C"/>
</dbReference>
<dbReference type="InterPro" id="IPR037041">
    <property type="entry name" value="Trigger_fac_C_sf"/>
</dbReference>
<dbReference type="InterPro" id="IPR008881">
    <property type="entry name" value="Trigger_fac_ribosome-bd_bac"/>
</dbReference>
<dbReference type="InterPro" id="IPR036611">
    <property type="entry name" value="Trigger_fac_ribosome-bd_sf"/>
</dbReference>
<dbReference type="InterPro" id="IPR027304">
    <property type="entry name" value="Trigger_fact/SurA_dom_sf"/>
</dbReference>
<dbReference type="NCBIfam" id="TIGR00115">
    <property type="entry name" value="tig"/>
    <property type="match status" value="1"/>
</dbReference>
<dbReference type="Pfam" id="PF00254">
    <property type="entry name" value="FKBP_C"/>
    <property type="match status" value="1"/>
</dbReference>
<dbReference type="Pfam" id="PF05698">
    <property type="entry name" value="Trigger_C"/>
    <property type="match status" value="1"/>
</dbReference>
<dbReference type="Pfam" id="PF05697">
    <property type="entry name" value="Trigger_N"/>
    <property type="match status" value="1"/>
</dbReference>
<dbReference type="PIRSF" id="PIRSF003095">
    <property type="entry name" value="Trigger_factor"/>
    <property type="match status" value="1"/>
</dbReference>
<dbReference type="SUPFAM" id="SSF54534">
    <property type="entry name" value="FKBP-like"/>
    <property type="match status" value="1"/>
</dbReference>
<dbReference type="SUPFAM" id="SSF109998">
    <property type="entry name" value="Triger factor/SurA peptide-binding domain-like"/>
    <property type="match status" value="1"/>
</dbReference>
<dbReference type="SUPFAM" id="SSF102735">
    <property type="entry name" value="Trigger factor ribosome-binding domain"/>
    <property type="match status" value="1"/>
</dbReference>
<dbReference type="PROSITE" id="PS50059">
    <property type="entry name" value="FKBP_PPIASE"/>
    <property type="match status" value="1"/>
</dbReference>
<feature type="chain" id="PRO_0000179362" description="Trigger factor">
    <location>
        <begin position="1"/>
        <end position="442"/>
    </location>
</feature>
<feature type="domain" description="PPIase FKBP-type" evidence="1">
    <location>
        <begin position="165"/>
        <end position="250"/>
    </location>
</feature>
<accession>Q7VIN8</accession>
<evidence type="ECO:0000255" key="1">
    <source>
        <dbReference type="HAMAP-Rule" id="MF_00303"/>
    </source>
</evidence>
<sequence length="442" mass="50710">MNFTTKRINSANAVINGSIALSKIEEKFEKVIKKIAKNIKIDGFRKGKVPTQVIKTRYKEQIDQDAQQEAIQELLTAALKELEIQPNSLIGNPMISQFNKLNDKIELEIKLGITPTLNLDNVEDYTPEVKLKTISKNLIDERLEEIAKNRAPLNEITQERTLQKDDTAQIDFEGFVDGKAFEGGKGENFNLAIGSNQFIPGFEDALIGMKNGEKRTIKVTFPEQYQAKHLAGKEASFDVTLHKILQKELPKIDDEFAKSIAGEESNLQSLKDMIKEQLEMEQKTEIYNKELKEKLVEILLKNISFDLPDLIVEQEMDILFRNALSQLKPEEFDKIKNNQDEAKKQRETHKDEARKSVQITFIMDALAKKYNIAINDNEVLQTIYYEAMMMGQDPKATLEHYQKNNLVPAIKMTMLEDRVLHYLLDKKFEESKANTNAQKDNQ</sequence>
<gene>
    <name evidence="1" type="primary">tig</name>
    <name type="ordered locus">HH_0566</name>
</gene>
<comment type="function">
    <text evidence="1">Involved in protein export. Acts as a chaperone by maintaining the newly synthesized protein in an open conformation. Functions as a peptidyl-prolyl cis-trans isomerase.</text>
</comment>
<comment type="catalytic activity">
    <reaction evidence="1">
        <text>[protein]-peptidylproline (omega=180) = [protein]-peptidylproline (omega=0)</text>
        <dbReference type="Rhea" id="RHEA:16237"/>
        <dbReference type="Rhea" id="RHEA-COMP:10747"/>
        <dbReference type="Rhea" id="RHEA-COMP:10748"/>
        <dbReference type="ChEBI" id="CHEBI:83833"/>
        <dbReference type="ChEBI" id="CHEBI:83834"/>
        <dbReference type="EC" id="5.2.1.8"/>
    </reaction>
</comment>
<comment type="subcellular location">
    <subcellularLocation>
        <location>Cytoplasm</location>
    </subcellularLocation>
    <text evidence="1">About half TF is bound to the ribosome near the polypeptide exit tunnel while the other half is free in the cytoplasm.</text>
</comment>
<comment type="domain">
    <text evidence="1">Consists of 3 domains; the N-terminus binds the ribosome, the middle domain has PPIase activity, while the C-terminus has intrinsic chaperone activity on its own.</text>
</comment>
<comment type="similarity">
    <text evidence="1">Belongs to the FKBP-type PPIase family. Tig subfamily.</text>
</comment>